<proteinExistence type="evidence at transcript level"/>
<protein>
    <recommendedName>
        <fullName>Transcription initiation factor TFIID subunit 3</fullName>
    </recommendedName>
    <alternativeName>
        <fullName>TBP-associated factor 3</fullName>
    </alternativeName>
</protein>
<evidence type="ECO:0000250" key="1"/>
<evidence type="ECO:0000250" key="2">
    <source>
        <dbReference type="UniProtKB" id="Q5VWG9"/>
    </source>
</evidence>
<evidence type="ECO:0000255" key="3">
    <source>
        <dbReference type="PROSITE-ProRule" id="PRU00146"/>
    </source>
</evidence>
<evidence type="ECO:0000256" key="4">
    <source>
        <dbReference type="SAM" id="MobiDB-lite"/>
    </source>
</evidence>
<evidence type="ECO:0000305" key="5"/>
<comment type="function">
    <text evidence="2">The TFIID basal transcription factor complex plays a major role in the initiation of RNA polymerase II (Pol II)-dependent transcription. TFIID recognizes and binds promoters with or without a TATA box via its subunit TBP, a TATA-box-binding protein, and promotes assembly of the pre-initiation complex (PIC). The TFIID complex consists of tbp and TBP-associated factors (TAFs).</text>
</comment>
<comment type="subunit">
    <text evidence="2">Component of the TFIID basal transcription factor complex, composed of TATA-box-binding protein tbp, and a number of TBP-associated factors (TAFs).</text>
</comment>
<comment type="subcellular location">
    <subcellularLocation>
        <location evidence="1">Nucleus</location>
    </subcellularLocation>
</comment>
<comment type="similarity">
    <text evidence="5">Belongs to the TAF3 family.</text>
</comment>
<keyword id="KW-0479">Metal-binding</keyword>
<keyword id="KW-0539">Nucleus</keyword>
<keyword id="KW-1185">Reference proteome</keyword>
<keyword id="KW-0804">Transcription</keyword>
<keyword id="KW-0805">Transcription regulation</keyword>
<keyword id="KW-0862">Zinc</keyword>
<keyword id="KW-0863">Zinc-finger</keyword>
<name>TAF3_XENLA</name>
<sequence>MGVNIHELEDYIHNIEPVTFPHQIPSFPVSKNNALQFPPPGSKDAEDRKEYIPDYLPLIISSQEEEEEEQVPTDGGTSAEAMQVPLEEEEEEGEMEDDETVNDENYLSKRPLDSPETMEMPFAKRIRLMNNKGDILDGSLEPREPLSSINSQKVPSVLSPAHKIDSQDLDVSYSDQIMLSPVSKSQAPPPSESKSLIPKTKSKGGSPGQKIKSPKATPISTVIGSPIRSPKSGPKERKSPGCAKSPKSPKSPKVPLAAPPPAIKTETPNRTPLATLSEKIGRENIQIKQNQTPLDSDQLNVEIPSKKPSIADNTIEDSIDAVIARACAEQEPDPFEFSSGSESEGEVFTSPKRLNISELTTPKVSASGINPGKTSSTSVPASGGTSSSDISWTMDDSINEVIRKVSQETPTNTPANNPPCFSSPSASPPTPEPLLKVFEDKAKLPPPVELKKKTKKEQRAKKKKDKDKLKDKERSKDKNKDRSKDKEKDKEKDGTKDGKVLWKDSNKDEDSELHRFKLKDFNEIDSKSKQKENCGKKDKEKHKDKKKDKEKGKKDKDKKGKDKTKEEKMKSPSTPIMLSSKDIALPMISTPNTVRLPSLLSSMSPLLPEKLFEEKEKSKEKDKKKDKKEKKKKKDKEKVKEKEKEKKEKEKEKEKEKKEKEKVKAELSIPAPSPVIPRLTLRVGAGQDTIVISKVVSAPESKAVPPPSLPKSPPPTPSPAPAPVLVVPPQAPPAPAAASPAPTPAPSALTSNAGSSKTPVRSVVTETVSTYVIRDEWGNQIWICPGCNKPDDGSPMIGCDQCDDWYHWPCVGINAAPPEDEQWFCTKCESKKKDKKQKKRKHKAH</sequence>
<gene>
    <name type="primary">taf3</name>
</gene>
<dbReference type="EMBL" id="BC090215">
    <property type="protein sequence ID" value="AAH90215.1"/>
    <property type="molecule type" value="mRNA"/>
</dbReference>
<dbReference type="RefSeq" id="NP_001089280.1">
    <property type="nucleotide sequence ID" value="NM_001095811.1"/>
</dbReference>
<dbReference type="SMR" id="Q5EAW9"/>
<dbReference type="DNASU" id="734328"/>
<dbReference type="GeneID" id="734328"/>
<dbReference type="KEGG" id="xla:734328"/>
<dbReference type="AGR" id="Xenbase:XB-GENE-940285"/>
<dbReference type="CTD" id="734328"/>
<dbReference type="Xenbase" id="XB-GENE-940285">
    <property type="gene designation" value="taf3.L"/>
</dbReference>
<dbReference type="OrthoDB" id="436852at2759"/>
<dbReference type="Proteomes" id="UP000186698">
    <property type="component" value="Chromosome 3L"/>
</dbReference>
<dbReference type="Bgee" id="734328">
    <property type="expression patterns" value="Expressed in egg cell and 19 other cell types or tissues"/>
</dbReference>
<dbReference type="GO" id="GO:0005669">
    <property type="term" value="C:transcription factor TFIID complex"/>
    <property type="evidence" value="ECO:0000318"/>
    <property type="project" value="GO_Central"/>
</dbReference>
<dbReference type="GO" id="GO:0002039">
    <property type="term" value="F:p53 binding"/>
    <property type="evidence" value="ECO:0000318"/>
    <property type="project" value="GO_Central"/>
</dbReference>
<dbReference type="GO" id="GO:0008270">
    <property type="term" value="F:zinc ion binding"/>
    <property type="evidence" value="ECO:0007669"/>
    <property type="project" value="UniProtKB-KW"/>
</dbReference>
<dbReference type="GO" id="GO:0045944">
    <property type="term" value="P:positive regulation of transcription by RNA polymerase II"/>
    <property type="evidence" value="ECO:0000318"/>
    <property type="project" value="GO_Central"/>
</dbReference>
<dbReference type="CDD" id="cd15522">
    <property type="entry name" value="PHD_TAF3"/>
    <property type="match status" value="1"/>
</dbReference>
<dbReference type="FunFam" id="3.30.40.10:FF:000317">
    <property type="entry name" value="transcription initiation factor TFIID subunit 3"/>
    <property type="match status" value="1"/>
</dbReference>
<dbReference type="Gene3D" id="3.30.40.10">
    <property type="entry name" value="Zinc/RING finger domain, C3HC4 (zinc finger)"/>
    <property type="match status" value="1"/>
</dbReference>
<dbReference type="InterPro" id="IPR019786">
    <property type="entry name" value="Zinc_finger_PHD-type_CS"/>
</dbReference>
<dbReference type="InterPro" id="IPR011011">
    <property type="entry name" value="Znf_FYVE_PHD"/>
</dbReference>
<dbReference type="InterPro" id="IPR001965">
    <property type="entry name" value="Znf_PHD"/>
</dbReference>
<dbReference type="InterPro" id="IPR019787">
    <property type="entry name" value="Znf_PHD-finger"/>
</dbReference>
<dbReference type="InterPro" id="IPR013083">
    <property type="entry name" value="Znf_RING/FYVE/PHD"/>
</dbReference>
<dbReference type="PANTHER" id="PTHR46452">
    <property type="entry name" value="TRANSCRIPTION INITIATION FACTOR TFIID SUBUNIT 3"/>
    <property type="match status" value="1"/>
</dbReference>
<dbReference type="PANTHER" id="PTHR46452:SF1">
    <property type="entry name" value="TRANSCRIPTION INITIATION FACTOR TFIID SUBUNIT 3"/>
    <property type="match status" value="1"/>
</dbReference>
<dbReference type="Pfam" id="PF00628">
    <property type="entry name" value="PHD"/>
    <property type="match status" value="1"/>
</dbReference>
<dbReference type="SMART" id="SM00249">
    <property type="entry name" value="PHD"/>
    <property type="match status" value="1"/>
</dbReference>
<dbReference type="SUPFAM" id="SSF57903">
    <property type="entry name" value="FYVE/PHD zinc finger"/>
    <property type="match status" value="1"/>
</dbReference>
<dbReference type="PROSITE" id="PS01359">
    <property type="entry name" value="ZF_PHD_1"/>
    <property type="match status" value="1"/>
</dbReference>
<dbReference type="PROSITE" id="PS50016">
    <property type="entry name" value="ZF_PHD_2"/>
    <property type="match status" value="1"/>
</dbReference>
<accession>Q5EAW9</accession>
<feature type="chain" id="PRO_0000245531" description="Transcription initiation factor TFIID subunit 3">
    <location>
        <begin position="1"/>
        <end position="845"/>
    </location>
</feature>
<feature type="zinc finger region" description="PHD-type" evidence="3">
    <location>
        <begin position="781"/>
        <end position="831"/>
    </location>
</feature>
<feature type="region of interest" description="Disordered" evidence="4">
    <location>
        <begin position="59"/>
        <end position="120"/>
    </location>
</feature>
<feature type="region of interest" description="Disordered" evidence="4">
    <location>
        <begin position="134"/>
        <end position="163"/>
    </location>
</feature>
<feature type="region of interest" description="Disordered" evidence="4">
    <location>
        <begin position="175"/>
        <end position="314"/>
    </location>
</feature>
<feature type="region of interest" description="Disordered" evidence="4">
    <location>
        <begin position="330"/>
        <end position="582"/>
    </location>
</feature>
<feature type="region of interest" description="Disordered" evidence="4">
    <location>
        <begin position="607"/>
        <end position="670"/>
    </location>
</feature>
<feature type="region of interest" description="Disordered" evidence="4">
    <location>
        <begin position="699"/>
        <end position="761"/>
    </location>
</feature>
<feature type="compositionally biased region" description="Acidic residues" evidence="4">
    <location>
        <begin position="86"/>
        <end position="102"/>
    </location>
</feature>
<feature type="compositionally biased region" description="Polar residues" evidence="4">
    <location>
        <begin position="175"/>
        <end position="186"/>
    </location>
</feature>
<feature type="compositionally biased region" description="Low complexity" evidence="4">
    <location>
        <begin position="240"/>
        <end position="256"/>
    </location>
</feature>
<feature type="compositionally biased region" description="Polar residues" evidence="4">
    <location>
        <begin position="286"/>
        <end position="299"/>
    </location>
</feature>
<feature type="compositionally biased region" description="Polar residues" evidence="4">
    <location>
        <begin position="357"/>
        <end position="396"/>
    </location>
</feature>
<feature type="compositionally biased region" description="Low complexity" evidence="4">
    <location>
        <begin position="409"/>
        <end position="425"/>
    </location>
</feature>
<feature type="compositionally biased region" description="Basic residues" evidence="4">
    <location>
        <begin position="452"/>
        <end position="465"/>
    </location>
</feature>
<feature type="compositionally biased region" description="Basic and acidic residues" evidence="4">
    <location>
        <begin position="466"/>
        <end position="538"/>
    </location>
</feature>
<feature type="compositionally biased region" description="Basic and acidic residues" evidence="4">
    <location>
        <begin position="547"/>
        <end position="570"/>
    </location>
</feature>
<feature type="compositionally biased region" description="Basic and acidic residues" evidence="4">
    <location>
        <begin position="610"/>
        <end position="623"/>
    </location>
</feature>
<feature type="compositionally biased region" description="Basic residues" evidence="4">
    <location>
        <begin position="624"/>
        <end position="635"/>
    </location>
</feature>
<feature type="compositionally biased region" description="Basic and acidic residues" evidence="4">
    <location>
        <begin position="636"/>
        <end position="665"/>
    </location>
</feature>
<feature type="compositionally biased region" description="Pro residues" evidence="4">
    <location>
        <begin position="704"/>
        <end position="722"/>
    </location>
</feature>
<feature type="compositionally biased region" description="Pro residues" evidence="4">
    <location>
        <begin position="729"/>
        <end position="745"/>
    </location>
</feature>
<feature type="compositionally biased region" description="Polar residues" evidence="4">
    <location>
        <begin position="752"/>
        <end position="761"/>
    </location>
</feature>
<organism>
    <name type="scientific">Xenopus laevis</name>
    <name type="common">African clawed frog</name>
    <dbReference type="NCBI Taxonomy" id="8355"/>
    <lineage>
        <taxon>Eukaryota</taxon>
        <taxon>Metazoa</taxon>
        <taxon>Chordata</taxon>
        <taxon>Craniata</taxon>
        <taxon>Vertebrata</taxon>
        <taxon>Euteleostomi</taxon>
        <taxon>Amphibia</taxon>
        <taxon>Batrachia</taxon>
        <taxon>Anura</taxon>
        <taxon>Pipoidea</taxon>
        <taxon>Pipidae</taxon>
        <taxon>Xenopodinae</taxon>
        <taxon>Xenopus</taxon>
        <taxon>Xenopus</taxon>
    </lineage>
</organism>
<reference key="1">
    <citation type="submission" date="2005-02" db="EMBL/GenBank/DDBJ databases">
        <authorList>
            <consortium name="NIH - Xenopus Gene Collection (XGC) project"/>
        </authorList>
    </citation>
    <scope>NUCLEOTIDE SEQUENCE [LARGE SCALE MRNA]</scope>
    <source>
        <tissue>Egg</tissue>
    </source>
</reference>